<keyword id="KW-1185">Reference proteome</keyword>
<keyword id="KW-0687">Ribonucleoprotein</keyword>
<keyword id="KW-0689">Ribosomal protein</keyword>
<keyword id="KW-0694">RNA-binding</keyword>
<keyword id="KW-0699">rRNA-binding</keyword>
<sequence>MANCIVRDWQGKEAGKASLDLKVAKEASALDLMHRAVLRQQAHSRQGTASTLTRSEVRGGGRKPYKQKGTGRARQGSVRTPLRPGGGIIFGPKPRSYNLAMNRKERRSALRTALMARIEDLVVVKDFATTLTTPKTKEIIDALGRLDVSATSKVLIILTNPSEAVRRSIRNLETVKLIAADQLNVFDLLHANKLVVGEDALAKIQEVYGDD</sequence>
<gene>
    <name evidence="1" type="primary">rplD</name>
    <name evidence="1" type="synonym">rpl4</name>
    <name type="ordered locus">sync_0436</name>
</gene>
<reference key="1">
    <citation type="journal article" date="2006" name="Proc. Natl. Acad. Sci. U.S.A.">
        <title>Genome sequence of Synechococcus CC9311: insights into adaptation to a coastal environment.</title>
        <authorList>
            <person name="Palenik B."/>
            <person name="Ren Q."/>
            <person name="Dupont C.L."/>
            <person name="Myers G.S."/>
            <person name="Heidelberg J.F."/>
            <person name="Badger J.H."/>
            <person name="Madupu R."/>
            <person name="Nelson W.C."/>
            <person name="Brinkac L.M."/>
            <person name="Dodson R.J."/>
            <person name="Durkin A.S."/>
            <person name="Daugherty S.C."/>
            <person name="Sullivan S.A."/>
            <person name="Khouri H."/>
            <person name="Mohamoud Y."/>
            <person name="Halpin R."/>
            <person name="Paulsen I.T."/>
        </authorList>
    </citation>
    <scope>NUCLEOTIDE SEQUENCE [LARGE SCALE GENOMIC DNA]</scope>
    <source>
        <strain>CC9311</strain>
    </source>
</reference>
<proteinExistence type="inferred from homology"/>
<feature type="chain" id="PRO_1000052519" description="Large ribosomal subunit protein uL4">
    <location>
        <begin position="1"/>
        <end position="211"/>
    </location>
</feature>
<feature type="region of interest" description="Disordered" evidence="2">
    <location>
        <begin position="40"/>
        <end position="85"/>
    </location>
</feature>
<feature type="compositionally biased region" description="Polar residues" evidence="2">
    <location>
        <begin position="41"/>
        <end position="54"/>
    </location>
</feature>
<feature type="compositionally biased region" description="Basic residues" evidence="2">
    <location>
        <begin position="60"/>
        <end position="71"/>
    </location>
</feature>
<name>RL4_SYNS3</name>
<comment type="function">
    <text evidence="1">One of the primary rRNA binding proteins, this protein initially binds near the 5'-end of the 23S rRNA. It is important during the early stages of 50S assembly. It makes multiple contacts with different domains of the 23S rRNA in the assembled 50S subunit and ribosome.</text>
</comment>
<comment type="function">
    <text evidence="1">Forms part of the polypeptide exit tunnel.</text>
</comment>
<comment type="subunit">
    <text evidence="1">Part of the 50S ribosomal subunit.</text>
</comment>
<comment type="similarity">
    <text evidence="1">Belongs to the universal ribosomal protein uL4 family.</text>
</comment>
<dbReference type="EMBL" id="CP000435">
    <property type="protein sequence ID" value="ABI45086.1"/>
    <property type="molecule type" value="Genomic_DNA"/>
</dbReference>
<dbReference type="RefSeq" id="WP_011618398.1">
    <property type="nucleotide sequence ID" value="NC_008319.1"/>
</dbReference>
<dbReference type="SMR" id="Q0ID06"/>
<dbReference type="STRING" id="64471.sync_0436"/>
<dbReference type="KEGG" id="syg:sync_0436"/>
<dbReference type="eggNOG" id="COG0088">
    <property type="taxonomic scope" value="Bacteria"/>
</dbReference>
<dbReference type="HOGENOM" id="CLU_041575_5_2_3"/>
<dbReference type="OrthoDB" id="9803201at2"/>
<dbReference type="Proteomes" id="UP000001961">
    <property type="component" value="Chromosome"/>
</dbReference>
<dbReference type="GO" id="GO:1990904">
    <property type="term" value="C:ribonucleoprotein complex"/>
    <property type="evidence" value="ECO:0007669"/>
    <property type="project" value="UniProtKB-KW"/>
</dbReference>
<dbReference type="GO" id="GO:0005840">
    <property type="term" value="C:ribosome"/>
    <property type="evidence" value="ECO:0007669"/>
    <property type="project" value="UniProtKB-KW"/>
</dbReference>
<dbReference type="GO" id="GO:0019843">
    <property type="term" value="F:rRNA binding"/>
    <property type="evidence" value="ECO:0007669"/>
    <property type="project" value="UniProtKB-UniRule"/>
</dbReference>
<dbReference type="GO" id="GO:0003735">
    <property type="term" value="F:structural constituent of ribosome"/>
    <property type="evidence" value="ECO:0007669"/>
    <property type="project" value="InterPro"/>
</dbReference>
<dbReference type="GO" id="GO:0006412">
    <property type="term" value="P:translation"/>
    <property type="evidence" value="ECO:0007669"/>
    <property type="project" value="UniProtKB-UniRule"/>
</dbReference>
<dbReference type="Gene3D" id="3.40.1370.10">
    <property type="match status" value="1"/>
</dbReference>
<dbReference type="HAMAP" id="MF_01328_B">
    <property type="entry name" value="Ribosomal_uL4_B"/>
    <property type="match status" value="1"/>
</dbReference>
<dbReference type="InterPro" id="IPR002136">
    <property type="entry name" value="Ribosomal_uL4"/>
</dbReference>
<dbReference type="InterPro" id="IPR013005">
    <property type="entry name" value="Ribosomal_uL4-like"/>
</dbReference>
<dbReference type="InterPro" id="IPR023574">
    <property type="entry name" value="Ribosomal_uL4_dom_sf"/>
</dbReference>
<dbReference type="NCBIfam" id="TIGR03953">
    <property type="entry name" value="rplD_bact"/>
    <property type="match status" value="1"/>
</dbReference>
<dbReference type="PANTHER" id="PTHR10746">
    <property type="entry name" value="50S RIBOSOMAL PROTEIN L4"/>
    <property type="match status" value="1"/>
</dbReference>
<dbReference type="PANTHER" id="PTHR10746:SF17">
    <property type="entry name" value="LARGE RIBOSOMAL SUBUNIT PROTEIN UL4C"/>
    <property type="match status" value="1"/>
</dbReference>
<dbReference type="Pfam" id="PF00573">
    <property type="entry name" value="Ribosomal_L4"/>
    <property type="match status" value="1"/>
</dbReference>
<dbReference type="SUPFAM" id="SSF52166">
    <property type="entry name" value="Ribosomal protein L4"/>
    <property type="match status" value="1"/>
</dbReference>
<organism>
    <name type="scientific">Synechococcus sp. (strain CC9311)</name>
    <dbReference type="NCBI Taxonomy" id="64471"/>
    <lineage>
        <taxon>Bacteria</taxon>
        <taxon>Bacillati</taxon>
        <taxon>Cyanobacteriota</taxon>
        <taxon>Cyanophyceae</taxon>
        <taxon>Synechococcales</taxon>
        <taxon>Synechococcaceae</taxon>
        <taxon>Synechococcus</taxon>
    </lineage>
</organism>
<evidence type="ECO:0000255" key="1">
    <source>
        <dbReference type="HAMAP-Rule" id="MF_01328"/>
    </source>
</evidence>
<evidence type="ECO:0000256" key="2">
    <source>
        <dbReference type="SAM" id="MobiDB-lite"/>
    </source>
</evidence>
<evidence type="ECO:0000305" key="3"/>
<accession>Q0ID06</accession>
<protein>
    <recommendedName>
        <fullName evidence="1">Large ribosomal subunit protein uL4</fullName>
    </recommendedName>
    <alternativeName>
        <fullName evidence="3">50S ribosomal protein L4</fullName>
    </alternativeName>
</protein>